<evidence type="ECO:0000255" key="1">
    <source>
        <dbReference type="HAMAP-Rule" id="MF_01436"/>
    </source>
</evidence>
<keyword id="KW-0997">Cell inner membrane</keyword>
<keyword id="KW-1003">Cell membrane</keyword>
<keyword id="KW-0472">Membrane</keyword>
<keyword id="KW-1185">Reference proteome</keyword>
<keyword id="KW-0812">Transmembrane</keyword>
<keyword id="KW-1133">Transmembrane helix</keyword>
<keyword id="KW-0813">Transport</keyword>
<reference key="1">
    <citation type="journal article" date="2002" name="Nucleic Acids Res.">
        <title>Genome sequence of Shigella flexneri 2a: insights into pathogenicity through comparison with genomes of Escherichia coli K12 and O157.</title>
        <authorList>
            <person name="Jin Q."/>
            <person name="Yuan Z."/>
            <person name="Xu J."/>
            <person name="Wang Y."/>
            <person name="Shen Y."/>
            <person name="Lu W."/>
            <person name="Wang J."/>
            <person name="Liu H."/>
            <person name="Yang J."/>
            <person name="Yang F."/>
            <person name="Zhang X."/>
            <person name="Zhang J."/>
            <person name="Yang G."/>
            <person name="Wu H."/>
            <person name="Qu D."/>
            <person name="Dong J."/>
            <person name="Sun L."/>
            <person name="Xue Y."/>
            <person name="Zhao A."/>
            <person name="Gao Y."/>
            <person name="Zhu J."/>
            <person name="Kan B."/>
            <person name="Ding K."/>
            <person name="Chen S."/>
            <person name="Cheng H."/>
            <person name="Yao Z."/>
            <person name="He B."/>
            <person name="Chen R."/>
            <person name="Ma D."/>
            <person name="Qiang B."/>
            <person name="Wen Y."/>
            <person name="Hou Y."/>
            <person name="Yu J."/>
        </authorList>
    </citation>
    <scope>NUCLEOTIDE SEQUENCE [LARGE SCALE GENOMIC DNA]</scope>
    <source>
        <strain>301 / Serotype 2a</strain>
    </source>
</reference>
<reference key="2">
    <citation type="journal article" date="2003" name="Infect. Immun.">
        <title>Complete genome sequence and comparative genomics of Shigella flexneri serotype 2a strain 2457T.</title>
        <authorList>
            <person name="Wei J."/>
            <person name="Goldberg M.B."/>
            <person name="Burland V."/>
            <person name="Venkatesan M.M."/>
            <person name="Deng W."/>
            <person name="Fournier G."/>
            <person name="Mayhew G.F."/>
            <person name="Plunkett G. III"/>
            <person name="Rose D.J."/>
            <person name="Darling A."/>
            <person name="Mau B."/>
            <person name="Perna N.T."/>
            <person name="Payne S.M."/>
            <person name="Runyen-Janecky L.J."/>
            <person name="Zhou S."/>
            <person name="Schwartz D.C."/>
            <person name="Blattner F.R."/>
        </authorList>
    </citation>
    <scope>NUCLEOTIDE SEQUENCE [LARGE SCALE GENOMIC DNA]</scope>
    <source>
        <strain>ATCC 700930 / 2457T / Serotype 2a</strain>
    </source>
</reference>
<organism>
    <name type="scientific">Shigella flexneri</name>
    <dbReference type="NCBI Taxonomy" id="623"/>
    <lineage>
        <taxon>Bacteria</taxon>
        <taxon>Pseudomonadati</taxon>
        <taxon>Pseudomonadota</taxon>
        <taxon>Gammaproteobacteria</taxon>
        <taxon>Enterobacterales</taxon>
        <taxon>Enterobacteriaceae</taxon>
        <taxon>Shigella</taxon>
    </lineage>
</organism>
<comment type="function">
    <text evidence="1">Component of an export pathway for enterobactin.</text>
</comment>
<comment type="subcellular location">
    <subcellularLocation>
        <location evidence="1">Cell inner membrane</location>
        <topology evidence="1">Multi-pass membrane protein</topology>
    </subcellularLocation>
</comment>
<comment type="similarity">
    <text evidence="1">Belongs to the major facilitator superfamily. EntS (TC 2.A.1.38) family.</text>
</comment>
<protein>
    <recommendedName>
        <fullName evidence="1">Enterobactin exporter EntS</fullName>
    </recommendedName>
</protein>
<sequence length="410" mass="42752">MNKQSWLLNLSLLKTHPAFRAVFLARFISIVSLGLLGVAVPVQIQMMTHSTWQVGLSVTLTGGAMFVGLMVGGVLADRYERKKVILLARGTCGIGFIGLCLNALLPEPSLLAIYLLGLWDGFFASLGVTALLAATSALVGRENLMQAGAITMLTVRLGSVISPMIGGLLLATGGVAWNYGLAAAGTFITLLPLLSLPELPPPPQPLEHPLKSLLAGFRFLLASPLLGGLLTMASAVLVLYPALADNWQMSAAQIGFLYAAIPLGAAIGALTSGKLAHSARPGLLMLLSTLGSFLAIGLFGLMPMWILGVVCLALFGWLSAVSSLLQYTMLQTQTPEAMLGRINGLWTAQNVTGDAIGAALLGGLGAMMTPVASASASGFGLLIIGVLLLLVLVELRRFRQTPPQVTASDS</sequence>
<proteinExistence type="inferred from homology"/>
<gene>
    <name evidence="1" type="primary">entS</name>
    <name type="ordered locus">SF0505</name>
    <name type="ordered locus">S0511</name>
</gene>
<dbReference type="EMBL" id="AE005674">
    <property type="protein sequence ID" value="AAN42154.1"/>
    <property type="molecule type" value="Genomic_DNA"/>
</dbReference>
<dbReference type="EMBL" id="AE014073">
    <property type="protein sequence ID" value="AAP16026.1"/>
    <property type="molecule type" value="Genomic_DNA"/>
</dbReference>
<dbReference type="RefSeq" id="WP_001041804.1">
    <property type="nucleotide sequence ID" value="NZ_WPGW01000083.1"/>
</dbReference>
<dbReference type="SMR" id="Q83SB6"/>
<dbReference type="STRING" id="198214.SF0505"/>
<dbReference type="PaxDb" id="198214-SF0505"/>
<dbReference type="KEGG" id="sfl:SF0505"/>
<dbReference type="KEGG" id="sfx:S0511"/>
<dbReference type="PATRIC" id="fig|198214.7.peg.587"/>
<dbReference type="HOGENOM" id="CLU_034180_11_0_6"/>
<dbReference type="Proteomes" id="UP000001006">
    <property type="component" value="Chromosome"/>
</dbReference>
<dbReference type="Proteomes" id="UP000002673">
    <property type="component" value="Chromosome"/>
</dbReference>
<dbReference type="GO" id="GO:0005886">
    <property type="term" value="C:plasma membrane"/>
    <property type="evidence" value="ECO:0007669"/>
    <property type="project" value="UniProtKB-SubCell"/>
</dbReference>
<dbReference type="GO" id="GO:0042931">
    <property type="term" value="F:enterobactin transmembrane transporter activity"/>
    <property type="evidence" value="ECO:0007669"/>
    <property type="project" value="InterPro"/>
</dbReference>
<dbReference type="CDD" id="cd06173">
    <property type="entry name" value="MFS_MefA_like"/>
    <property type="match status" value="1"/>
</dbReference>
<dbReference type="Gene3D" id="1.20.1250.20">
    <property type="entry name" value="MFS general substrate transporter like domains"/>
    <property type="match status" value="1"/>
</dbReference>
<dbReference type="HAMAP" id="MF_01436">
    <property type="entry name" value="MFS_EntS"/>
    <property type="match status" value="1"/>
</dbReference>
<dbReference type="InterPro" id="IPR023722">
    <property type="entry name" value="Enterobactin_exp_EntS"/>
</dbReference>
<dbReference type="InterPro" id="IPR011701">
    <property type="entry name" value="MFS"/>
</dbReference>
<dbReference type="InterPro" id="IPR020846">
    <property type="entry name" value="MFS_dom"/>
</dbReference>
<dbReference type="InterPro" id="IPR036259">
    <property type="entry name" value="MFS_trans_sf"/>
</dbReference>
<dbReference type="NCBIfam" id="NF007792">
    <property type="entry name" value="PRK10489.1"/>
    <property type="match status" value="1"/>
</dbReference>
<dbReference type="PANTHER" id="PTHR23513:SF9">
    <property type="entry name" value="ENTEROBACTIN EXPORTER ENTS"/>
    <property type="match status" value="1"/>
</dbReference>
<dbReference type="PANTHER" id="PTHR23513">
    <property type="entry name" value="INTEGRAL MEMBRANE EFFLUX PROTEIN-RELATED"/>
    <property type="match status" value="1"/>
</dbReference>
<dbReference type="Pfam" id="PF07690">
    <property type="entry name" value="MFS_1"/>
    <property type="match status" value="1"/>
</dbReference>
<dbReference type="SUPFAM" id="SSF103473">
    <property type="entry name" value="MFS general substrate transporter"/>
    <property type="match status" value="1"/>
</dbReference>
<dbReference type="PROSITE" id="PS50850">
    <property type="entry name" value="MFS"/>
    <property type="match status" value="1"/>
</dbReference>
<feature type="chain" id="PRO_0000227657" description="Enterobactin exporter EntS">
    <location>
        <begin position="1"/>
        <end position="410"/>
    </location>
</feature>
<feature type="topological domain" description="Cytoplasmic" evidence="1">
    <location>
        <begin position="1"/>
        <end position="21"/>
    </location>
</feature>
<feature type="transmembrane region" description="Helical" evidence="1">
    <location>
        <begin position="22"/>
        <end position="42"/>
    </location>
</feature>
<feature type="topological domain" description="Periplasmic" evidence="1">
    <location>
        <begin position="43"/>
        <end position="55"/>
    </location>
</feature>
<feature type="transmembrane region" description="Helical" evidence="1">
    <location>
        <begin position="56"/>
        <end position="76"/>
    </location>
</feature>
<feature type="topological domain" description="Cytoplasmic" evidence="1">
    <location>
        <begin position="77"/>
        <end position="83"/>
    </location>
</feature>
<feature type="transmembrane region" description="Helical" evidence="1">
    <location>
        <begin position="84"/>
        <end position="104"/>
    </location>
</feature>
<feature type="topological domain" description="Periplasmic" evidence="1">
    <location>
        <begin position="105"/>
        <end position="109"/>
    </location>
</feature>
<feature type="transmembrane region" description="Helical" evidence="1">
    <location>
        <begin position="110"/>
        <end position="130"/>
    </location>
</feature>
<feature type="topological domain" description="Cytoplasmic" evidence="1">
    <location>
        <begin position="131"/>
        <end position="156"/>
    </location>
</feature>
<feature type="transmembrane region" description="Helical" evidence="1">
    <location>
        <begin position="157"/>
        <end position="177"/>
    </location>
</feature>
<feature type="topological domain" description="Periplasmic" evidence="1">
    <location>
        <position position="178"/>
    </location>
</feature>
<feature type="transmembrane region" description="Helical" evidence="1">
    <location>
        <begin position="179"/>
        <end position="199"/>
    </location>
</feature>
<feature type="topological domain" description="Cytoplasmic" evidence="1">
    <location>
        <begin position="200"/>
        <end position="218"/>
    </location>
</feature>
<feature type="transmembrane region" description="Helical" evidence="1">
    <location>
        <begin position="219"/>
        <end position="233"/>
    </location>
</feature>
<feature type="topological domain" description="Periplasmic" evidence="1">
    <location>
        <begin position="234"/>
        <end position="250"/>
    </location>
</feature>
<feature type="transmembrane region" description="Helical" evidence="1">
    <location>
        <begin position="251"/>
        <end position="271"/>
    </location>
</feature>
<feature type="topological domain" description="Cytoplasmic" evidence="1">
    <location>
        <begin position="272"/>
        <end position="281"/>
    </location>
</feature>
<feature type="transmembrane region" description="Helical" evidence="1">
    <location>
        <begin position="282"/>
        <end position="301"/>
    </location>
</feature>
<feature type="topological domain" description="Periplasmic" evidence="1">
    <location>
        <begin position="302"/>
        <end position="307"/>
    </location>
</feature>
<feature type="transmembrane region" description="Helical" evidence="1">
    <location>
        <begin position="308"/>
        <end position="330"/>
    </location>
</feature>
<feature type="topological domain" description="Cytoplasmic" evidence="1">
    <location>
        <begin position="331"/>
        <end position="350"/>
    </location>
</feature>
<feature type="transmembrane region" description="Helical" evidence="1">
    <location>
        <begin position="351"/>
        <end position="371"/>
    </location>
</feature>
<feature type="topological domain" description="Periplasmic" evidence="1">
    <location>
        <position position="372"/>
    </location>
</feature>
<feature type="transmembrane region" description="Helical" evidence="1">
    <location>
        <begin position="373"/>
        <end position="393"/>
    </location>
</feature>
<feature type="topological domain" description="Cytoplasmic" evidence="1">
    <location>
        <begin position="394"/>
        <end position="410"/>
    </location>
</feature>
<name>ENTS_SHIFL</name>
<accession>Q83SB6</accession>
<accession>Q7C2S5</accession>